<name>CP4C3_DROME</name>
<feature type="chain" id="PRO_0000051831" description="Cytochrome P450 4c3">
    <location>
        <begin position="1"/>
        <end position="535"/>
    </location>
</feature>
<feature type="binding site" description="covalent" evidence="1">
    <location>
        <position position="342"/>
    </location>
    <ligand>
        <name>heme</name>
        <dbReference type="ChEBI" id="CHEBI:30413"/>
    </ligand>
</feature>
<feature type="binding site" description="axial binding residue" evidence="1">
    <location>
        <position position="481"/>
    </location>
    <ligand>
        <name>heme</name>
        <dbReference type="ChEBI" id="CHEBI:30413"/>
    </ligand>
    <ligandPart>
        <name>Fe</name>
        <dbReference type="ChEBI" id="CHEBI:18248"/>
    </ligandPart>
</feature>
<comment type="function">
    <text evidence="1">May be involved in the metabolism of insect hormones and in the breakdown of synthetic insecticides.</text>
</comment>
<comment type="cofactor">
    <cofactor evidence="1">
        <name>heme</name>
        <dbReference type="ChEBI" id="CHEBI:30413"/>
    </cofactor>
</comment>
<comment type="subcellular location">
    <subcellularLocation>
        <location evidence="2">Endoplasmic reticulum membrane</location>
        <topology evidence="2">Peripheral membrane protein</topology>
    </subcellularLocation>
    <subcellularLocation>
        <location evidence="2">Microsome membrane</location>
        <topology evidence="2">Peripheral membrane protein</topology>
    </subcellularLocation>
</comment>
<comment type="similarity">
    <text evidence="2">Belongs to the cytochrome P450 family.</text>
</comment>
<evidence type="ECO:0000250" key="1"/>
<evidence type="ECO:0000305" key="2"/>
<gene>
    <name type="primary">Cyp4c3</name>
    <name type="ORF">CG1438</name>
</gene>
<proteinExistence type="evidence at transcript level"/>
<sequence length="535" mass="60757">MSSKVITSLMAESILLSKVGQVISGYSPITVFLLGSILIFLVVYNKRRSRLVKYIEKIPGPAAMPFLGNAIEMNVDHDELFNRVIGMQKLWGTRIGINRVWQGTAPRVLLFEPETVEPILNSQKFVNKSHDYDYLHPWLGEGLLTSTDRKWHSRRKILTPAFHFKILDDFIDVFNEQSAVLARKLAVEVGSEAFNLFPYVTLCTLDIVCETAMGRRIYAQSNSESEYVKAVYGIGSIVQSRQAKIWLQSDFIFSLTAEYKLHQSYINTLHGFSNMVIRERKAELAILQENNNNNNNNAPDAYDDVGKKKRLAFLDLLIDASKEGTVLSNEDIREEVDTFMFEGHDTTSAAISWTLFLLGCHPEYQERVVEELDSIFGDDKETPATMKNLMDMRYLECCIKDSLRLFPSVPMMARMVGEDVNIGGKIVPAGTQAIIMTYALHRNPRVFPKPEQFNPDNFLPENCAGRHPFAYIPFSAGPRNCIGQKFAILEEKAVISTVLRKYKIEAVDRREDLTLLGELILRPKDGLRVKITPRD</sequence>
<organism>
    <name type="scientific">Drosophila melanogaster</name>
    <name type="common">Fruit fly</name>
    <dbReference type="NCBI Taxonomy" id="7227"/>
    <lineage>
        <taxon>Eukaryota</taxon>
        <taxon>Metazoa</taxon>
        <taxon>Ecdysozoa</taxon>
        <taxon>Arthropoda</taxon>
        <taxon>Hexapoda</taxon>
        <taxon>Insecta</taxon>
        <taxon>Pterygota</taxon>
        <taxon>Neoptera</taxon>
        <taxon>Endopterygota</taxon>
        <taxon>Diptera</taxon>
        <taxon>Brachycera</taxon>
        <taxon>Muscomorpha</taxon>
        <taxon>Ephydroidea</taxon>
        <taxon>Drosophilidae</taxon>
        <taxon>Drosophila</taxon>
        <taxon>Sophophora</taxon>
    </lineage>
</organism>
<accession>Q9VA27</accession>
<accession>Q24121</accession>
<keyword id="KW-0256">Endoplasmic reticulum</keyword>
<keyword id="KW-0349">Heme</keyword>
<keyword id="KW-0408">Iron</keyword>
<keyword id="KW-0472">Membrane</keyword>
<keyword id="KW-0479">Metal-binding</keyword>
<keyword id="KW-0492">Microsome</keyword>
<keyword id="KW-0503">Monooxygenase</keyword>
<keyword id="KW-0560">Oxidoreductase</keyword>
<keyword id="KW-1185">Reference proteome</keyword>
<dbReference type="EC" id="1.14.-.-"/>
<dbReference type="EMBL" id="AE014297">
    <property type="protein sequence ID" value="AAF57098.1"/>
    <property type="molecule type" value="Genomic_DNA"/>
</dbReference>
<dbReference type="EMBL" id="BT010108">
    <property type="protein sequence ID" value="AAQ22577.1"/>
    <property type="molecule type" value="mRNA"/>
</dbReference>
<dbReference type="EMBL" id="U34323">
    <property type="protein sequence ID" value="AAA80657.1"/>
    <property type="molecule type" value="mRNA"/>
</dbReference>
<dbReference type="RefSeq" id="NP_524598.1">
    <property type="nucleotide sequence ID" value="NM_079859.4"/>
</dbReference>
<dbReference type="SMR" id="Q9VA27"/>
<dbReference type="BioGRID" id="68513">
    <property type="interactions" value="1"/>
</dbReference>
<dbReference type="FunCoup" id="Q9VA27">
    <property type="interactions" value="60"/>
</dbReference>
<dbReference type="IntAct" id="Q9VA27">
    <property type="interactions" value="23"/>
</dbReference>
<dbReference type="STRING" id="7227.FBpp0085074"/>
<dbReference type="PaxDb" id="7227-FBpp0085074"/>
<dbReference type="DNASU" id="43663"/>
<dbReference type="EnsemblMetazoa" id="FBtr0085712">
    <property type="protein sequence ID" value="FBpp0085074"/>
    <property type="gene ID" value="FBgn0015032"/>
</dbReference>
<dbReference type="GeneID" id="43663"/>
<dbReference type="KEGG" id="dme:Dmel_CG1438"/>
<dbReference type="AGR" id="FB:FBgn0015032"/>
<dbReference type="CTD" id="43663"/>
<dbReference type="FlyBase" id="FBgn0015032">
    <property type="gene designation" value="Cyp4c3"/>
</dbReference>
<dbReference type="VEuPathDB" id="VectorBase:FBgn0015032"/>
<dbReference type="eggNOG" id="KOG0157">
    <property type="taxonomic scope" value="Eukaryota"/>
</dbReference>
<dbReference type="GeneTree" id="ENSGT00940000166362"/>
<dbReference type="HOGENOM" id="CLU_001570_5_1_1"/>
<dbReference type="InParanoid" id="Q9VA27"/>
<dbReference type="OMA" id="MDMRYLE"/>
<dbReference type="OrthoDB" id="1470350at2759"/>
<dbReference type="PhylomeDB" id="Q9VA27"/>
<dbReference type="Reactome" id="R-DME-193144">
    <property type="pathway name" value="Estrogen biosynthesis"/>
</dbReference>
<dbReference type="Reactome" id="R-DME-211976">
    <property type="pathway name" value="Endogenous sterols"/>
</dbReference>
<dbReference type="Reactome" id="R-DME-2453902">
    <property type="pathway name" value="The canonical retinoid cycle in rods (twilight vision)"/>
</dbReference>
<dbReference type="BioGRID-ORCS" id="43663">
    <property type="hits" value="0 hits in 3 CRISPR screens"/>
</dbReference>
<dbReference type="GenomeRNAi" id="43663"/>
<dbReference type="PRO" id="PR:Q9VA27"/>
<dbReference type="Proteomes" id="UP000000803">
    <property type="component" value="Chromosome 3R"/>
</dbReference>
<dbReference type="Bgee" id="FBgn0015032">
    <property type="expression patterns" value="Expressed in tormogen cell in proboscis and 12 other cell types or tissues"/>
</dbReference>
<dbReference type="GO" id="GO:0005789">
    <property type="term" value="C:endoplasmic reticulum membrane"/>
    <property type="evidence" value="ECO:0007669"/>
    <property type="project" value="UniProtKB-SubCell"/>
</dbReference>
<dbReference type="GO" id="GO:0020037">
    <property type="term" value="F:heme binding"/>
    <property type="evidence" value="ECO:0007669"/>
    <property type="project" value="InterPro"/>
</dbReference>
<dbReference type="GO" id="GO:0005506">
    <property type="term" value="F:iron ion binding"/>
    <property type="evidence" value="ECO:0007669"/>
    <property type="project" value="InterPro"/>
</dbReference>
<dbReference type="GO" id="GO:0004497">
    <property type="term" value="F:monooxygenase activity"/>
    <property type="evidence" value="ECO:0007669"/>
    <property type="project" value="UniProtKB-KW"/>
</dbReference>
<dbReference type="GO" id="GO:0016705">
    <property type="term" value="F:oxidoreductase activity, acting on paired donors, with incorporation or reduction of molecular oxygen"/>
    <property type="evidence" value="ECO:0007669"/>
    <property type="project" value="InterPro"/>
</dbReference>
<dbReference type="CDD" id="cd20660">
    <property type="entry name" value="CYP4V-like"/>
    <property type="match status" value="1"/>
</dbReference>
<dbReference type="Gene3D" id="1.10.630.10">
    <property type="entry name" value="Cytochrome P450"/>
    <property type="match status" value="1"/>
</dbReference>
<dbReference type="InterPro" id="IPR001128">
    <property type="entry name" value="Cyt_P450"/>
</dbReference>
<dbReference type="InterPro" id="IPR017972">
    <property type="entry name" value="Cyt_P450_CS"/>
</dbReference>
<dbReference type="InterPro" id="IPR002401">
    <property type="entry name" value="Cyt_P450_E_grp-I"/>
</dbReference>
<dbReference type="InterPro" id="IPR036396">
    <property type="entry name" value="Cyt_P450_sf"/>
</dbReference>
<dbReference type="InterPro" id="IPR050196">
    <property type="entry name" value="Cytochrome_P450_Monoox"/>
</dbReference>
<dbReference type="PANTHER" id="PTHR24291:SF189">
    <property type="entry name" value="CYTOCHROME P450 4C3-RELATED"/>
    <property type="match status" value="1"/>
</dbReference>
<dbReference type="PANTHER" id="PTHR24291">
    <property type="entry name" value="CYTOCHROME P450 FAMILY 4"/>
    <property type="match status" value="1"/>
</dbReference>
<dbReference type="Pfam" id="PF00067">
    <property type="entry name" value="p450"/>
    <property type="match status" value="1"/>
</dbReference>
<dbReference type="PRINTS" id="PR00463">
    <property type="entry name" value="EP450I"/>
</dbReference>
<dbReference type="PRINTS" id="PR00385">
    <property type="entry name" value="P450"/>
</dbReference>
<dbReference type="SUPFAM" id="SSF48264">
    <property type="entry name" value="Cytochrome P450"/>
    <property type="match status" value="1"/>
</dbReference>
<dbReference type="PROSITE" id="PS00086">
    <property type="entry name" value="CYTOCHROME_P450"/>
    <property type="match status" value="1"/>
</dbReference>
<protein>
    <recommendedName>
        <fullName>Cytochrome P450 4c3</fullName>
        <ecNumber>1.14.-.-</ecNumber>
    </recommendedName>
    <alternativeName>
        <fullName>CYPIVC3</fullName>
    </alternativeName>
</protein>
<reference key="1">
    <citation type="journal article" date="2000" name="Science">
        <title>The genome sequence of Drosophila melanogaster.</title>
        <authorList>
            <person name="Adams M.D."/>
            <person name="Celniker S.E."/>
            <person name="Holt R.A."/>
            <person name="Evans C.A."/>
            <person name="Gocayne J.D."/>
            <person name="Amanatides P.G."/>
            <person name="Scherer S.E."/>
            <person name="Li P.W."/>
            <person name="Hoskins R.A."/>
            <person name="Galle R.F."/>
            <person name="George R.A."/>
            <person name="Lewis S.E."/>
            <person name="Richards S."/>
            <person name="Ashburner M."/>
            <person name="Henderson S.N."/>
            <person name="Sutton G.G."/>
            <person name="Wortman J.R."/>
            <person name="Yandell M.D."/>
            <person name="Zhang Q."/>
            <person name="Chen L.X."/>
            <person name="Brandon R.C."/>
            <person name="Rogers Y.-H.C."/>
            <person name="Blazej R.G."/>
            <person name="Champe M."/>
            <person name="Pfeiffer B.D."/>
            <person name="Wan K.H."/>
            <person name="Doyle C."/>
            <person name="Baxter E.G."/>
            <person name="Helt G."/>
            <person name="Nelson C.R."/>
            <person name="Miklos G.L.G."/>
            <person name="Abril J.F."/>
            <person name="Agbayani A."/>
            <person name="An H.-J."/>
            <person name="Andrews-Pfannkoch C."/>
            <person name="Baldwin D."/>
            <person name="Ballew R.M."/>
            <person name="Basu A."/>
            <person name="Baxendale J."/>
            <person name="Bayraktaroglu L."/>
            <person name="Beasley E.M."/>
            <person name="Beeson K.Y."/>
            <person name="Benos P.V."/>
            <person name="Berman B.P."/>
            <person name="Bhandari D."/>
            <person name="Bolshakov S."/>
            <person name="Borkova D."/>
            <person name="Botchan M.R."/>
            <person name="Bouck J."/>
            <person name="Brokstein P."/>
            <person name="Brottier P."/>
            <person name="Burtis K.C."/>
            <person name="Busam D.A."/>
            <person name="Butler H."/>
            <person name="Cadieu E."/>
            <person name="Center A."/>
            <person name="Chandra I."/>
            <person name="Cherry J.M."/>
            <person name="Cawley S."/>
            <person name="Dahlke C."/>
            <person name="Davenport L.B."/>
            <person name="Davies P."/>
            <person name="de Pablos B."/>
            <person name="Delcher A."/>
            <person name="Deng Z."/>
            <person name="Mays A.D."/>
            <person name="Dew I."/>
            <person name="Dietz S.M."/>
            <person name="Dodson K."/>
            <person name="Doup L.E."/>
            <person name="Downes M."/>
            <person name="Dugan-Rocha S."/>
            <person name="Dunkov B.C."/>
            <person name="Dunn P."/>
            <person name="Durbin K.J."/>
            <person name="Evangelista C.C."/>
            <person name="Ferraz C."/>
            <person name="Ferriera S."/>
            <person name="Fleischmann W."/>
            <person name="Fosler C."/>
            <person name="Gabrielian A.E."/>
            <person name="Garg N.S."/>
            <person name="Gelbart W.M."/>
            <person name="Glasser K."/>
            <person name="Glodek A."/>
            <person name="Gong F."/>
            <person name="Gorrell J.H."/>
            <person name="Gu Z."/>
            <person name="Guan P."/>
            <person name="Harris M."/>
            <person name="Harris N.L."/>
            <person name="Harvey D.A."/>
            <person name="Heiman T.J."/>
            <person name="Hernandez J.R."/>
            <person name="Houck J."/>
            <person name="Hostin D."/>
            <person name="Houston K.A."/>
            <person name="Howland T.J."/>
            <person name="Wei M.-H."/>
            <person name="Ibegwam C."/>
            <person name="Jalali M."/>
            <person name="Kalush F."/>
            <person name="Karpen G.H."/>
            <person name="Ke Z."/>
            <person name="Kennison J.A."/>
            <person name="Ketchum K.A."/>
            <person name="Kimmel B.E."/>
            <person name="Kodira C.D."/>
            <person name="Kraft C.L."/>
            <person name="Kravitz S."/>
            <person name="Kulp D."/>
            <person name="Lai Z."/>
            <person name="Lasko P."/>
            <person name="Lei Y."/>
            <person name="Levitsky A.A."/>
            <person name="Li J.H."/>
            <person name="Li Z."/>
            <person name="Liang Y."/>
            <person name="Lin X."/>
            <person name="Liu X."/>
            <person name="Mattei B."/>
            <person name="McIntosh T.C."/>
            <person name="McLeod M.P."/>
            <person name="McPherson D."/>
            <person name="Merkulov G."/>
            <person name="Milshina N.V."/>
            <person name="Mobarry C."/>
            <person name="Morris J."/>
            <person name="Moshrefi A."/>
            <person name="Mount S.M."/>
            <person name="Moy M."/>
            <person name="Murphy B."/>
            <person name="Murphy L."/>
            <person name="Muzny D.M."/>
            <person name="Nelson D.L."/>
            <person name="Nelson D.R."/>
            <person name="Nelson K.A."/>
            <person name="Nixon K."/>
            <person name="Nusskern D.R."/>
            <person name="Pacleb J.M."/>
            <person name="Palazzolo M."/>
            <person name="Pittman G.S."/>
            <person name="Pan S."/>
            <person name="Pollard J."/>
            <person name="Puri V."/>
            <person name="Reese M.G."/>
            <person name="Reinert K."/>
            <person name="Remington K."/>
            <person name="Saunders R.D.C."/>
            <person name="Scheeler F."/>
            <person name="Shen H."/>
            <person name="Shue B.C."/>
            <person name="Siden-Kiamos I."/>
            <person name="Simpson M."/>
            <person name="Skupski M.P."/>
            <person name="Smith T.J."/>
            <person name="Spier E."/>
            <person name="Spradling A.C."/>
            <person name="Stapleton M."/>
            <person name="Strong R."/>
            <person name="Sun E."/>
            <person name="Svirskas R."/>
            <person name="Tector C."/>
            <person name="Turner R."/>
            <person name="Venter E."/>
            <person name="Wang A.H."/>
            <person name="Wang X."/>
            <person name="Wang Z.-Y."/>
            <person name="Wassarman D.A."/>
            <person name="Weinstock G.M."/>
            <person name="Weissenbach J."/>
            <person name="Williams S.M."/>
            <person name="Woodage T."/>
            <person name="Worley K.C."/>
            <person name="Wu D."/>
            <person name="Yang S."/>
            <person name="Yao Q.A."/>
            <person name="Ye J."/>
            <person name="Yeh R.-F."/>
            <person name="Zaveri J.S."/>
            <person name="Zhan M."/>
            <person name="Zhang G."/>
            <person name="Zhao Q."/>
            <person name="Zheng L."/>
            <person name="Zheng X.H."/>
            <person name="Zhong F.N."/>
            <person name="Zhong W."/>
            <person name="Zhou X."/>
            <person name="Zhu S.C."/>
            <person name="Zhu X."/>
            <person name="Smith H.O."/>
            <person name="Gibbs R.A."/>
            <person name="Myers E.W."/>
            <person name="Rubin G.M."/>
            <person name="Venter J.C."/>
        </authorList>
    </citation>
    <scope>NUCLEOTIDE SEQUENCE [LARGE SCALE GENOMIC DNA]</scope>
    <source>
        <strain>Berkeley</strain>
    </source>
</reference>
<reference key="2">
    <citation type="journal article" date="2002" name="Genome Biol.">
        <title>Annotation of the Drosophila melanogaster euchromatic genome: a systematic review.</title>
        <authorList>
            <person name="Misra S."/>
            <person name="Crosby M.A."/>
            <person name="Mungall C.J."/>
            <person name="Matthews B.B."/>
            <person name="Campbell K.S."/>
            <person name="Hradecky P."/>
            <person name="Huang Y."/>
            <person name="Kaminker J.S."/>
            <person name="Millburn G.H."/>
            <person name="Prochnik S.E."/>
            <person name="Smith C.D."/>
            <person name="Tupy J.L."/>
            <person name="Whitfield E.J."/>
            <person name="Bayraktaroglu L."/>
            <person name="Berman B.P."/>
            <person name="Bettencourt B.R."/>
            <person name="Celniker S.E."/>
            <person name="de Grey A.D.N.J."/>
            <person name="Drysdale R.A."/>
            <person name="Harris N.L."/>
            <person name="Richter J."/>
            <person name="Russo S."/>
            <person name="Schroeder A.J."/>
            <person name="Shu S.Q."/>
            <person name="Stapleton M."/>
            <person name="Yamada C."/>
            <person name="Ashburner M."/>
            <person name="Gelbart W.M."/>
            <person name="Rubin G.M."/>
            <person name="Lewis S.E."/>
        </authorList>
    </citation>
    <scope>GENOME REANNOTATION</scope>
    <source>
        <strain>Berkeley</strain>
    </source>
</reference>
<reference key="3">
    <citation type="submission" date="2003-08" db="EMBL/GenBank/DDBJ databases">
        <authorList>
            <person name="Stapleton M."/>
            <person name="Brokstein P."/>
            <person name="Hong L."/>
            <person name="Agbayani A."/>
            <person name="Carlson J.W."/>
            <person name="Champe M."/>
            <person name="Chavez C."/>
            <person name="Dorsett V."/>
            <person name="Dresnek D."/>
            <person name="Farfan D."/>
            <person name="Frise E."/>
            <person name="George R.A."/>
            <person name="Gonzalez M."/>
            <person name="Guarin H."/>
            <person name="Kronmiller B."/>
            <person name="Li P.W."/>
            <person name="Liao G."/>
            <person name="Miranda A."/>
            <person name="Mungall C.J."/>
            <person name="Nunoo J."/>
            <person name="Pacleb J.M."/>
            <person name="Paragas V."/>
            <person name="Park S."/>
            <person name="Patel S."/>
            <person name="Phouanenavong S."/>
            <person name="Wan K.H."/>
            <person name="Yu C."/>
            <person name="Lewis S.E."/>
            <person name="Rubin G.M."/>
            <person name="Celniker S.E."/>
        </authorList>
    </citation>
    <scope>NUCLEOTIDE SEQUENCE [LARGE SCALE MRNA]</scope>
    <source>
        <strain>Berkeley</strain>
        <tissue>Head</tissue>
    </source>
</reference>
<reference key="4">
    <citation type="journal article" date="1996" name="Mol. Gen. Genet.">
        <title>Cytochrome P450 gene clusters in Drosophila melanogaster.</title>
        <authorList>
            <person name="Dunkov B.C."/>
            <person name="Rodriguez-Arnaiz R."/>
            <person name="Pittendrigh B."/>
            <person name="ffrench-Constant R.H."/>
            <person name="Feyereisen R."/>
        </authorList>
    </citation>
    <scope>NUCLEOTIDE SEQUENCE [MRNA] OF 347-472</scope>
    <source>
        <strain>Haag-79</strain>
    </source>
</reference>